<sequence length="829" mass="91548">MKPPGSISRRPTLTGCSLPGASCGPGRCPAGPVPARAPPCRLLLVLLLLPALATSSRPRARGAAAPSAPHWNETAEKTLGVLADEDNTLQQNSSSRNTSYSSAVQKEITLPSRLVYYINQDSESPYHVLDTKARHQQKHNKAVHLAQASFQIEAFGSKFILDLTLNNGLLSSDYVEIHYEDGKQMYSKGGEHCYYHGSIRGVKDSRVALSTCNGLHGMFEDDTFVYMIEPLELTDDEKSTGRPHIIQKTLAGQYSKQMKNLSTDGSDQWPLLPELQWLRRRKRAVNPSRGVFEEMKYLELMIVNDHKTYKKHRSSHAHTNNFAKSVVNLVDSIYKEQLNTRVVLVAVETWTEKDHIDITINPVQMLHDFSKYRQRIKQHADAVHLISRVTFHYKRSSLSYFGGVCSRIRGVGVNEYGLPMAVAQVLSQSLAQNLGIQWEPSSRKPKCECIESWGGCIMEETGVSHSRKFSKCSILEYRDFLQRGGGACLFNRPTKLFEPTECGNGYVEAGEECDCGFHVECYGVCCKKCSLSNGAHCSDGPCCNNTSCLFQSRGYECRDAVNSCDITEYCTGDSGQCPPNLHKQDGYSCNQNQGRCYNGECKTRDNQCQYIWGTKAAGSDKFCYEKLNTEGTEKGNCGKDGDRWIPCSKHDVFCGFLLCTNLTRAPRIGQLQGEIIPTSFYHQGRVIDCSGAHVVLDDDTDVGYVEDGTPCGPSMMCLDRKCLQIQALNMSSCPLDSRGKVCSGHGVCSNEATCICDFTWAGTDCSIRDPVRNPNPPKDEGPKGPSATNLIIGSIAGAILVAAIVLGGTGWGFKNVKKRRFDPTQQGPI</sequence>
<gene>
    <name type="primary">Adam23</name>
    <name type="synonym">Mdc3</name>
</gene>
<name>ADA23_MOUSE</name>
<comment type="function">
    <text evidence="1">May play a role in cell-cell and cell-matrix interactions. This is a non-catalytic metalloprotease-like protein (By similarity).</text>
</comment>
<comment type="subunit">
    <text>Can bind to LGI1 and LGI4.</text>
</comment>
<comment type="subcellular location">
    <subcellularLocation>
        <location evidence="9">Cell membrane</location>
        <topology evidence="9">Single-pass type I membrane protein</topology>
    </subcellularLocation>
</comment>
<comment type="subcellular location">
    <molecule>Isoform Gamma</molecule>
    <subcellularLocation>
        <location>Secreted</location>
    </subcellularLocation>
</comment>
<comment type="alternative products">
    <event type="alternative splicing"/>
    <isoform>
        <id>Q9R1V7-1</id>
        <name>Alpha</name>
        <sequence type="displayed"/>
    </isoform>
    <isoform>
        <id>Q9R1V7-2</id>
        <name>Beta</name>
        <sequence type="described" ref="VSP_012050"/>
    </isoform>
    <isoform>
        <id>Q9R1V7-3</id>
        <name>Gamma</name>
        <sequence type="described" ref="VSP_012049"/>
    </isoform>
    <isoform>
        <id>Q9R1V7-4</id>
        <name>Delta</name>
        <sequence type="described" ref="VSP_012047 VSP_012048"/>
    </isoform>
</comment>
<comment type="tissue specificity">
    <text evidence="6">Brain specific.</text>
</comment>
<comment type="developmental stage">
    <text evidence="7">On 15 dpc embryo the level of isoform Gamma exceeded that of isoform Alpha and isoform Beta and decreased after birth. On P10 post neonatal, the level of isoform Gamma is undetectable and isoform Alpha and isoform Beta are expressed again.</text>
</comment>
<accession>Q9R1V7</accession>
<accession>Q6QDY9</accession>
<accession>Q6QDZ0</accession>
<accession>Q8CC33</accession>
<feature type="signal peptide" evidence="2">
    <location>
        <begin position="1"/>
        <end position="55"/>
    </location>
</feature>
<feature type="propeptide" id="PRO_0000029120" evidence="2">
    <location>
        <begin position="56"/>
        <end position="283"/>
    </location>
</feature>
<feature type="chain" id="PRO_0000029121" description="Disintegrin and metalloproteinase domain-containing protein 23">
    <location>
        <begin position="284"/>
        <end position="829"/>
    </location>
</feature>
<feature type="topological domain" description="Extracellular" evidence="2">
    <location>
        <begin position="284"/>
        <end position="789"/>
    </location>
</feature>
<feature type="transmembrane region" description="Helical" evidence="2">
    <location>
        <begin position="790"/>
        <end position="810"/>
    </location>
</feature>
<feature type="topological domain" description="Cytoplasmic" evidence="2">
    <location>
        <begin position="811"/>
        <end position="829"/>
    </location>
</feature>
<feature type="domain" description="Peptidase M12B" evidence="5">
    <location>
        <begin position="296"/>
        <end position="493"/>
    </location>
</feature>
<feature type="domain" description="Disintegrin" evidence="3">
    <location>
        <begin position="499"/>
        <end position="585"/>
    </location>
</feature>
<feature type="domain" description="EGF-like" evidence="4">
    <location>
        <begin position="729"/>
        <end position="766"/>
    </location>
</feature>
<feature type="glycosylation site" description="N-linked (GlcNAc...) asparagine" evidence="2">
    <location>
        <position position="72"/>
    </location>
</feature>
<feature type="glycosylation site" description="N-linked (GlcNAc...) asparagine" evidence="2">
    <location>
        <position position="92"/>
    </location>
</feature>
<feature type="glycosylation site" description="N-linked (GlcNAc...) asparagine" evidence="2">
    <location>
        <position position="97"/>
    </location>
</feature>
<feature type="glycosylation site" description="N-linked (GlcNAc...) asparagine" evidence="2">
    <location>
        <position position="260"/>
    </location>
</feature>
<feature type="glycosylation site" description="N-linked (GlcNAc...) asparagine" evidence="2">
    <location>
        <position position="544"/>
    </location>
</feature>
<feature type="glycosylation site" description="N-linked (GlcNAc...) asparagine" evidence="2">
    <location>
        <position position="545"/>
    </location>
</feature>
<feature type="glycosylation site" description="N-linked (GlcNAc...) asparagine" evidence="2">
    <location>
        <position position="661"/>
    </location>
</feature>
<feature type="glycosylation site" description="N-linked (GlcNAc...) asparagine" evidence="2">
    <location>
        <position position="729"/>
    </location>
</feature>
<feature type="disulfide bond" evidence="1">
    <location>
        <begin position="405"/>
        <end position="488"/>
    </location>
</feature>
<feature type="disulfide bond" evidence="1">
    <location>
        <begin position="447"/>
        <end position="472"/>
    </location>
</feature>
<feature type="disulfide bond" evidence="1">
    <location>
        <begin position="449"/>
        <end position="456"/>
    </location>
</feature>
<feature type="disulfide bond" evidence="1">
    <location>
        <begin position="557"/>
        <end position="577"/>
    </location>
</feature>
<feature type="disulfide bond" evidence="1">
    <location>
        <begin position="733"/>
        <end position="748"/>
    </location>
</feature>
<feature type="disulfide bond" evidence="1">
    <location>
        <begin position="742"/>
        <end position="754"/>
    </location>
</feature>
<feature type="disulfide bond" evidence="1">
    <location>
        <begin position="756"/>
        <end position="765"/>
    </location>
</feature>
<feature type="splice variant" id="VSP_012047" description="In isoform Delta." evidence="8">
    <original>S</original>
    <variation>R</variation>
    <location>
        <position position="690"/>
    </location>
</feature>
<feature type="splice variant" id="VSP_012048" description="In isoform Delta." evidence="8">
    <location>
        <begin position="691"/>
        <end position="829"/>
    </location>
</feature>
<feature type="splice variant" id="VSP_012049" description="In isoform Gamma." evidence="9">
    <original>GPSATNLIIGSIAGAILVAAIVLGGTGWGFKNVKKRRFDPTQQGPI</original>
    <variation>ETSRRGDSIPLSKAPSESSALEECHLALLGSGNDMFSAMLPELLSL</variation>
    <location>
        <begin position="784"/>
        <end position="829"/>
    </location>
</feature>
<feature type="splice variant" id="VSP_012050" description="In isoform Beta." evidence="9">
    <original>GPSATNLIIGSIAGAILVAAIVLGGTGWGFK</original>
    <variation>VNMATSRLIGAVAGTVLALGVIFGGTGWGIE</variation>
    <location>
        <begin position="784"/>
        <end position="814"/>
    </location>
</feature>
<feature type="sequence conflict" description="In Ref. 2; BAC28550." evidence="9" ref="2">
    <original>S</original>
    <variation>I</variation>
    <location>
        <position position="6"/>
    </location>
</feature>
<feature type="sequence conflict" description="In Ref. 2; BAC28550." evidence="9" ref="2">
    <original>P</original>
    <variation>S</variation>
    <location>
        <position position="11"/>
    </location>
</feature>
<feature type="sequence conflict" description="In Ref. 2; BAC28550." evidence="9" ref="2">
    <original>PGAS</original>
    <variation>SGTF</variation>
    <location>
        <begin position="19"/>
        <end position="22"/>
    </location>
</feature>
<feature type="sequence conflict" description="In Ref. 2; BAC28550." evidence="9" ref="2">
    <original>A</original>
    <variation>S</variation>
    <location>
        <position position="30"/>
    </location>
</feature>
<feature type="sequence conflict" description="In Ref. 2; BAC28550." evidence="9" ref="2">
    <original>VPA</original>
    <variation>EPV</variation>
    <location>
        <begin position="33"/>
        <end position="35"/>
    </location>
</feature>
<proteinExistence type="evidence at protein level"/>
<reference key="1">
    <citation type="journal article" date="1999" name="Gene">
        <title>Cloning and chromosomal mapping of mouse ADAM11, ADAM22 and ADAM23.</title>
        <authorList>
            <person name="Sagane K."/>
            <person name="Yamazaki K."/>
            <person name="Mizui Y."/>
            <person name="Tanaka I."/>
        </authorList>
    </citation>
    <scope>NUCLEOTIDE SEQUENCE [MRNA] (ISOFORM ALPHA)</scope>
    <scope>TISSUE SPECIFICITY</scope>
    <source>
        <tissue>Brain</tissue>
    </source>
</reference>
<reference key="2">
    <citation type="journal article" date="2005" name="Science">
        <title>The transcriptional landscape of the mammalian genome.</title>
        <authorList>
            <person name="Carninci P."/>
            <person name="Kasukawa T."/>
            <person name="Katayama S."/>
            <person name="Gough J."/>
            <person name="Frith M.C."/>
            <person name="Maeda N."/>
            <person name="Oyama R."/>
            <person name="Ravasi T."/>
            <person name="Lenhard B."/>
            <person name="Wells C."/>
            <person name="Kodzius R."/>
            <person name="Shimokawa K."/>
            <person name="Bajic V.B."/>
            <person name="Brenner S.E."/>
            <person name="Batalov S."/>
            <person name="Forrest A.R."/>
            <person name="Zavolan M."/>
            <person name="Davis M.J."/>
            <person name="Wilming L.G."/>
            <person name="Aidinis V."/>
            <person name="Allen J.E."/>
            <person name="Ambesi-Impiombato A."/>
            <person name="Apweiler R."/>
            <person name="Aturaliya R.N."/>
            <person name="Bailey T.L."/>
            <person name="Bansal M."/>
            <person name="Baxter L."/>
            <person name="Beisel K.W."/>
            <person name="Bersano T."/>
            <person name="Bono H."/>
            <person name="Chalk A.M."/>
            <person name="Chiu K.P."/>
            <person name="Choudhary V."/>
            <person name="Christoffels A."/>
            <person name="Clutterbuck D.R."/>
            <person name="Crowe M.L."/>
            <person name="Dalla E."/>
            <person name="Dalrymple B.P."/>
            <person name="de Bono B."/>
            <person name="Della Gatta G."/>
            <person name="di Bernardo D."/>
            <person name="Down T."/>
            <person name="Engstrom P."/>
            <person name="Fagiolini M."/>
            <person name="Faulkner G."/>
            <person name="Fletcher C.F."/>
            <person name="Fukushima T."/>
            <person name="Furuno M."/>
            <person name="Futaki S."/>
            <person name="Gariboldi M."/>
            <person name="Georgii-Hemming P."/>
            <person name="Gingeras T.R."/>
            <person name="Gojobori T."/>
            <person name="Green R.E."/>
            <person name="Gustincich S."/>
            <person name="Harbers M."/>
            <person name="Hayashi Y."/>
            <person name="Hensch T.K."/>
            <person name="Hirokawa N."/>
            <person name="Hill D."/>
            <person name="Huminiecki L."/>
            <person name="Iacono M."/>
            <person name="Ikeo K."/>
            <person name="Iwama A."/>
            <person name="Ishikawa T."/>
            <person name="Jakt M."/>
            <person name="Kanapin A."/>
            <person name="Katoh M."/>
            <person name="Kawasawa Y."/>
            <person name="Kelso J."/>
            <person name="Kitamura H."/>
            <person name="Kitano H."/>
            <person name="Kollias G."/>
            <person name="Krishnan S.P."/>
            <person name="Kruger A."/>
            <person name="Kummerfeld S.K."/>
            <person name="Kurochkin I.V."/>
            <person name="Lareau L.F."/>
            <person name="Lazarevic D."/>
            <person name="Lipovich L."/>
            <person name="Liu J."/>
            <person name="Liuni S."/>
            <person name="McWilliam S."/>
            <person name="Madan Babu M."/>
            <person name="Madera M."/>
            <person name="Marchionni L."/>
            <person name="Matsuda H."/>
            <person name="Matsuzawa S."/>
            <person name="Miki H."/>
            <person name="Mignone F."/>
            <person name="Miyake S."/>
            <person name="Morris K."/>
            <person name="Mottagui-Tabar S."/>
            <person name="Mulder N."/>
            <person name="Nakano N."/>
            <person name="Nakauchi H."/>
            <person name="Ng P."/>
            <person name="Nilsson R."/>
            <person name="Nishiguchi S."/>
            <person name="Nishikawa S."/>
            <person name="Nori F."/>
            <person name="Ohara O."/>
            <person name="Okazaki Y."/>
            <person name="Orlando V."/>
            <person name="Pang K.C."/>
            <person name="Pavan W.J."/>
            <person name="Pavesi G."/>
            <person name="Pesole G."/>
            <person name="Petrovsky N."/>
            <person name="Piazza S."/>
            <person name="Reed J."/>
            <person name="Reid J.F."/>
            <person name="Ring B.Z."/>
            <person name="Ringwald M."/>
            <person name="Rost B."/>
            <person name="Ruan Y."/>
            <person name="Salzberg S.L."/>
            <person name="Sandelin A."/>
            <person name="Schneider C."/>
            <person name="Schoenbach C."/>
            <person name="Sekiguchi K."/>
            <person name="Semple C.A."/>
            <person name="Seno S."/>
            <person name="Sessa L."/>
            <person name="Sheng Y."/>
            <person name="Shibata Y."/>
            <person name="Shimada H."/>
            <person name="Shimada K."/>
            <person name="Silva D."/>
            <person name="Sinclair B."/>
            <person name="Sperling S."/>
            <person name="Stupka E."/>
            <person name="Sugiura K."/>
            <person name="Sultana R."/>
            <person name="Takenaka Y."/>
            <person name="Taki K."/>
            <person name="Tammoja K."/>
            <person name="Tan S.L."/>
            <person name="Tang S."/>
            <person name="Taylor M.S."/>
            <person name="Tegner J."/>
            <person name="Teichmann S.A."/>
            <person name="Ueda H.R."/>
            <person name="van Nimwegen E."/>
            <person name="Verardo R."/>
            <person name="Wei C.L."/>
            <person name="Yagi K."/>
            <person name="Yamanishi H."/>
            <person name="Zabarovsky E."/>
            <person name="Zhu S."/>
            <person name="Zimmer A."/>
            <person name="Hide W."/>
            <person name="Bult C."/>
            <person name="Grimmond S.M."/>
            <person name="Teasdale R.D."/>
            <person name="Liu E.T."/>
            <person name="Brusic V."/>
            <person name="Quackenbush J."/>
            <person name="Wahlestedt C."/>
            <person name="Mattick J.S."/>
            <person name="Hume D.A."/>
            <person name="Kai C."/>
            <person name="Sasaki D."/>
            <person name="Tomaru Y."/>
            <person name="Fukuda S."/>
            <person name="Kanamori-Katayama M."/>
            <person name="Suzuki M."/>
            <person name="Aoki J."/>
            <person name="Arakawa T."/>
            <person name="Iida J."/>
            <person name="Imamura K."/>
            <person name="Itoh M."/>
            <person name="Kato T."/>
            <person name="Kawaji H."/>
            <person name="Kawagashira N."/>
            <person name="Kawashima T."/>
            <person name="Kojima M."/>
            <person name="Kondo S."/>
            <person name="Konno H."/>
            <person name="Nakano K."/>
            <person name="Ninomiya N."/>
            <person name="Nishio T."/>
            <person name="Okada M."/>
            <person name="Plessy C."/>
            <person name="Shibata K."/>
            <person name="Shiraki T."/>
            <person name="Suzuki S."/>
            <person name="Tagami M."/>
            <person name="Waki K."/>
            <person name="Watahiki A."/>
            <person name="Okamura-Oho Y."/>
            <person name="Suzuki H."/>
            <person name="Kawai J."/>
            <person name="Hayashizaki Y."/>
        </authorList>
    </citation>
    <scope>NUCLEOTIDE SEQUENCE [LARGE SCALE MRNA] (ISOFORM DELTA)</scope>
    <source>
        <strain>C57BL/6J</strain>
        <tissue>Diencephalon</tissue>
    </source>
</reference>
<reference key="3">
    <citation type="journal article" date="2009" name="PLoS Biol.">
        <title>Lineage-specific biology revealed by a finished genome assembly of the mouse.</title>
        <authorList>
            <person name="Church D.M."/>
            <person name="Goodstadt L."/>
            <person name="Hillier L.W."/>
            <person name="Zody M.C."/>
            <person name="Goldstein S."/>
            <person name="She X."/>
            <person name="Bult C.J."/>
            <person name="Agarwala R."/>
            <person name="Cherry J.L."/>
            <person name="DiCuccio M."/>
            <person name="Hlavina W."/>
            <person name="Kapustin Y."/>
            <person name="Meric P."/>
            <person name="Maglott D."/>
            <person name="Birtle Z."/>
            <person name="Marques A.C."/>
            <person name="Graves T."/>
            <person name="Zhou S."/>
            <person name="Teague B."/>
            <person name="Potamousis K."/>
            <person name="Churas C."/>
            <person name="Place M."/>
            <person name="Herschleb J."/>
            <person name="Runnheim R."/>
            <person name="Forrest D."/>
            <person name="Amos-Landgraf J."/>
            <person name="Schwartz D.C."/>
            <person name="Cheng Z."/>
            <person name="Lindblad-Toh K."/>
            <person name="Eichler E.E."/>
            <person name="Ponting C.P."/>
        </authorList>
    </citation>
    <scope>NUCLEOTIDE SEQUENCE [LARGE SCALE GENOMIC DNA]</scope>
    <source>
        <strain>C57BL/6J</strain>
    </source>
</reference>
<reference key="4">
    <citation type="journal article" date="2004" name="Gene">
        <title>Two novel isoforms of Adam23 expressed in the developmental process of mouse and human brains.</title>
        <authorList>
            <person name="Sun Y.P."/>
            <person name="Deng K.J."/>
            <person name="Wang F."/>
            <person name="Zhang J."/>
            <person name="Huang X."/>
            <person name="Qiao S."/>
            <person name="Zhao S."/>
        </authorList>
    </citation>
    <scope>NUCLEOTIDE SEQUENCE OF 666-829 (ISOFORMS ALPHA; BETA AND GAMMA)</scope>
    <scope>DEVELOPMENTAL STAGE</scope>
    <source>
        <strain>BALB/cJ</strain>
        <tissue>Brain</tissue>
    </source>
</reference>
<reference key="5">
    <citation type="journal article" date="2008" name="Int. J. Biol. Sci.">
        <title>LGI1 and LGI4 bind to ADAM22, ADAM23 and ADAM11.</title>
        <authorList>
            <person name="Sagane K."/>
            <person name="Ishihama Y."/>
            <person name="Sugimoto H."/>
        </authorList>
    </citation>
    <scope>INTERACTION WITH LGI1 AND LGI4</scope>
</reference>
<reference key="6">
    <citation type="journal article" date="2010" name="Cell">
        <title>A tissue-specific atlas of mouse protein phosphorylation and expression.</title>
        <authorList>
            <person name="Huttlin E.L."/>
            <person name="Jedrychowski M.P."/>
            <person name="Elias J.E."/>
            <person name="Goswami T."/>
            <person name="Rad R."/>
            <person name="Beausoleil S.A."/>
            <person name="Villen J."/>
            <person name="Haas W."/>
            <person name="Sowa M.E."/>
            <person name="Gygi S.P."/>
        </authorList>
    </citation>
    <scope>IDENTIFICATION BY MASS SPECTROMETRY [LARGE SCALE ANALYSIS]</scope>
    <source>
        <tissue>Brain</tissue>
    </source>
</reference>
<evidence type="ECO:0000250" key="1"/>
<evidence type="ECO:0000255" key="2"/>
<evidence type="ECO:0000255" key="3">
    <source>
        <dbReference type="PROSITE-ProRule" id="PRU00068"/>
    </source>
</evidence>
<evidence type="ECO:0000255" key="4">
    <source>
        <dbReference type="PROSITE-ProRule" id="PRU00076"/>
    </source>
</evidence>
<evidence type="ECO:0000255" key="5">
    <source>
        <dbReference type="PROSITE-ProRule" id="PRU00276"/>
    </source>
</evidence>
<evidence type="ECO:0000269" key="6">
    <source>
    </source>
</evidence>
<evidence type="ECO:0000269" key="7">
    <source>
    </source>
</evidence>
<evidence type="ECO:0000303" key="8">
    <source>
    </source>
</evidence>
<evidence type="ECO:0000305" key="9"/>
<keyword id="KW-0025">Alternative splicing</keyword>
<keyword id="KW-0130">Cell adhesion</keyword>
<keyword id="KW-1003">Cell membrane</keyword>
<keyword id="KW-0165">Cleavage on pair of basic residues</keyword>
<keyword id="KW-1015">Disulfide bond</keyword>
<keyword id="KW-0245">EGF-like domain</keyword>
<keyword id="KW-0325">Glycoprotein</keyword>
<keyword id="KW-0472">Membrane</keyword>
<keyword id="KW-1185">Reference proteome</keyword>
<keyword id="KW-0964">Secreted</keyword>
<keyword id="KW-0732">Signal</keyword>
<keyword id="KW-0812">Transmembrane</keyword>
<keyword id="KW-1133">Transmembrane helix</keyword>
<protein>
    <recommendedName>
        <fullName>Disintegrin and metalloproteinase domain-containing protein 23</fullName>
        <shortName>ADAM 23</shortName>
    </recommendedName>
    <alternativeName>
        <fullName>Metalloproteinase-like, disintegrin-like, and cysteine-rich protein 3</fullName>
        <shortName>MDC-3</shortName>
    </alternativeName>
</protein>
<dbReference type="EMBL" id="AB009673">
    <property type="protein sequence ID" value="BAA83381.1"/>
    <property type="molecule type" value="mRNA"/>
</dbReference>
<dbReference type="EMBL" id="AK034022">
    <property type="protein sequence ID" value="BAC28550.1"/>
    <property type="molecule type" value="mRNA"/>
</dbReference>
<dbReference type="EMBL" id="AL645534">
    <property type="status" value="NOT_ANNOTATED_CDS"/>
    <property type="molecule type" value="Genomic_DNA"/>
</dbReference>
<dbReference type="EMBL" id="AL645637">
    <property type="status" value="NOT_ANNOTATED_CDS"/>
    <property type="molecule type" value="Genomic_DNA"/>
</dbReference>
<dbReference type="EMBL" id="AL683801">
    <property type="status" value="NOT_ANNOTATED_CDS"/>
    <property type="molecule type" value="Genomic_DNA"/>
</dbReference>
<dbReference type="EMBL" id="AY545640">
    <property type="protein sequence ID" value="AAS49900.1"/>
    <property type="molecule type" value="mRNA"/>
</dbReference>
<dbReference type="EMBL" id="AY545641">
    <property type="protein sequence ID" value="AAS49901.1"/>
    <property type="molecule type" value="mRNA"/>
</dbReference>
<dbReference type="CCDS" id="CCDS14999.1">
    <molecule id="Q9R1V7-1"/>
</dbReference>
<dbReference type="RefSeq" id="NP_035910.1">
    <molecule id="Q9R1V7-1"/>
    <property type="nucleotide sequence ID" value="NM_011780.3"/>
</dbReference>
<dbReference type="RefSeq" id="XP_006496032.1">
    <molecule id="Q9R1V7-2"/>
    <property type="nucleotide sequence ID" value="XM_006495969.5"/>
</dbReference>
<dbReference type="RefSeq" id="XP_006496033.1">
    <molecule id="Q9R1V7-3"/>
    <property type="nucleotide sequence ID" value="XM_006495970.5"/>
</dbReference>
<dbReference type="SMR" id="Q9R1V7"/>
<dbReference type="BioGRID" id="204715">
    <property type="interactions" value="15"/>
</dbReference>
<dbReference type="FunCoup" id="Q9R1V7">
    <property type="interactions" value="144"/>
</dbReference>
<dbReference type="IntAct" id="Q9R1V7">
    <property type="interactions" value="2"/>
</dbReference>
<dbReference type="MINT" id="Q9R1V7"/>
<dbReference type="STRING" id="10090.ENSMUSP00000084633"/>
<dbReference type="MEROPS" id="M12.979"/>
<dbReference type="GlyConnect" id="2259">
    <property type="glycosylation" value="5 N-Linked glycans (3 sites)"/>
</dbReference>
<dbReference type="GlyCosmos" id="Q9R1V7">
    <property type="glycosylation" value="8 sites, 5 glycans"/>
</dbReference>
<dbReference type="GlyGen" id="Q9R1V7">
    <property type="glycosylation" value="9 sites, 9 N-linked glycans (6 sites), 1 O-linked glycan (1 site)"/>
</dbReference>
<dbReference type="iPTMnet" id="Q9R1V7"/>
<dbReference type="PhosphoSitePlus" id="Q9R1V7"/>
<dbReference type="SwissPalm" id="Q9R1V7"/>
<dbReference type="PaxDb" id="10090-ENSMUSP00000138362"/>
<dbReference type="PeptideAtlas" id="Q9R1V7"/>
<dbReference type="ProteomicsDB" id="285881">
    <molecule id="Q9R1V7-1"/>
</dbReference>
<dbReference type="ProteomicsDB" id="285882">
    <molecule id="Q9R1V7-2"/>
</dbReference>
<dbReference type="ProteomicsDB" id="285883">
    <molecule id="Q9R1V7-3"/>
</dbReference>
<dbReference type="ProteomicsDB" id="285884">
    <molecule id="Q9R1V7-4"/>
</dbReference>
<dbReference type="Pumba" id="Q9R1V7"/>
<dbReference type="Antibodypedia" id="34180">
    <property type="antibodies" value="232 antibodies from 29 providers"/>
</dbReference>
<dbReference type="DNASU" id="23792"/>
<dbReference type="Ensembl" id="ENSMUST00000087374.10">
    <molecule id="Q9R1V7-1"/>
    <property type="protein sequence ID" value="ENSMUSP00000084633.4"/>
    <property type="gene ID" value="ENSMUSG00000025964.16"/>
</dbReference>
<dbReference type="Ensembl" id="ENSMUST00000114103.8">
    <molecule id="Q9R1V7-3"/>
    <property type="protein sequence ID" value="ENSMUSP00000139862.2"/>
    <property type="gene ID" value="ENSMUSG00000025964.16"/>
</dbReference>
<dbReference type="Ensembl" id="ENSMUST00000114107.3">
    <molecule id="Q9R1V7-2"/>
    <property type="protein sequence ID" value="ENSMUSP00000109742.2"/>
    <property type="gene ID" value="ENSMUSG00000025964.16"/>
</dbReference>
<dbReference type="GeneID" id="23792"/>
<dbReference type="KEGG" id="mmu:23792"/>
<dbReference type="UCSC" id="uc007bge.1">
    <molecule id="Q9R1V7-4"/>
    <property type="organism name" value="mouse"/>
</dbReference>
<dbReference type="UCSC" id="uc007bgg.1">
    <molecule id="Q9R1V7-1"/>
    <property type="organism name" value="mouse"/>
</dbReference>
<dbReference type="AGR" id="MGI:1345162"/>
<dbReference type="CTD" id="8745"/>
<dbReference type="MGI" id="MGI:1345162">
    <property type="gene designation" value="Adam23"/>
</dbReference>
<dbReference type="VEuPathDB" id="HostDB:ENSMUSG00000025964"/>
<dbReference type="eggNOG" id="KOG3607">
    <property type="taxonomic scope" value="Eukaryota"/>
</dbReference>
<dbReference type="GeneTree" id="ENSGT00940000158781"/>
<dbReference type="HOGENOM" id="CLU_012714_5_2_1"/>
<dbReference type="InParanoid" id="Q9R1V7"/>
<dbReference type="OMA" id="ECDCTES"/>
<dbReference type="OrthoDB" id="26060at9989"/>
<dbReference type="Reactome" id="R-MMU-5682910">
    <property type="pathway name" value="LGI-ADAM interactions"/>
</dbReference>
<dbReference type="BioGRID-ORCS" id="23792">
    <property type="hits" value="0 hits in 76 CRISPR screens"/>
</dbReference>
<dbReference type="CD-CODE" id="CE726F99">
    <property type="entry name" value="Postsynaptic density"/>
</dbReference>
<dbReference type="PRO" id="PR:Q9R1V7"/>
<dbReference type="Proteomes" id="UP000000589">
    <property type="component" value="Chromosome 1"/>
</dbReference>
<dbReference type="RNAct" id="Q9R1V7">
    <property type="molecule type" value="protein"/>
</dbReference>
<dbReference type="Bgee" id="ENSMUSG00000025964">
    <property type="expression patterns" value="Expressed in facial nucleus and 218 other cell types or tissues"/>
</dbReference>
<dbReference type="GO" id="GO:0005576">
    <property type="term" value="C:extracellular region"/>
    <property type="evidence" value="ECO:0007669"/>
    <property type="project" value="UniProtKB-SubCell"/>
</dbReference>
<dbReference type="GO" id="GO:0098978">
    <property type="term" value="C:glutamatergic synapse"/>
    <property type="evidence" value="ECO:0000314"/>
    <property type="project" value="SynGO"/>
</dbReference>
<dbReference type="GO" id="GO:0042734">
    <property type="term" value="C:presynaptic membrane"/>
    <property type="evidence" value="ECO:0000314"/>
    <property type="project" value="SynGO"/>
</dbReference>
<dbReference type="GO" id="GO:0004222">
    <property type="term" value="F:metalloendopeptidase activity"/>
    <property type="evidence" value="ECO:0007669"/>
    <property type="project" value="InterPro"/>
</dbReference>
<dbReference type="GO" id="GO:0007155">
    <property type="term" value="P:cell adhesion"/>
    <property type="evidence" value="ECO:0007669"/>
    <property type="project" value="UniProtKB-KW"/>
</dbReference>
<dbReference type="GO" id="GO:1990830">
    <property type="term" value="P:cellular response to leukemia inhibitory factor"/>
    <property type="evidence" value="ECO:0000270"/>
    <property type="project" value="MGI"/>
</dbReference>
<dbReference type="GO" id="GO:0006508">
    <property type="term" value="P:proteolysis"/>
    <property type="evidence" value="ECO:0007669"/>
    <property type="project" value="InterPro"/>
</dbReference>
<dbReference type="CDD" id="cd04269">
    <property type="entry name" value="ZnMc_adamalysin_II_like"/>
    <property type="match status" value="1"/>
</dbReference>
<dbReference type="FunFam" id="2.10.25.10:FF:000147">
    <property type="entry name" value="Disintegrin and metalloproteinase domain-containing protein 11"/>
    <property type="match status" value="1"/>
</dbReference>
<dbReference type="FunFam" id="3.40.390.10:FF:000014">
    <property type="entry name" value="disintegrin and metalloproteinase domain-containing protein 11"/>
    <property type="match status" value="1"/>
</dbReference>
<dbReference type="FunFam" id="4.10.70.10:FF:000001">
    <property type="entry name" value="Disintegrin and metalloproteinase domain-containing protein 22"/>
    <property type="match status" value="1"/>
</dbReference>
<dbReference type="Gene3D" id="3.40.390.10">
    <property type="entry name" value="Collagenase (Catalytic Domain)"/>
    <property type="match status" value="1"/>
</dbReference>
<dbReference type="Gene3D" id="4.10.70.10">
    <property type="entry name" value="Disintegrin domain"/>
    <property type="match status" value="1"/>
</dbReference>
<dbReference type="Gene3D" id="2.10.25.10">
    <property type="entry name" value="Laminin"/>
    <property type="match status" value="1"/>
</dbReference>
<dbReference type="InterPro" id="IPR006586">
    <property type="entry name" value="ADAM_Cys-rich"/>
</dbReference>
<dbReference type="InterPro" id="IPR001762">
    <property type="entry name" value="Disintegrin_dom"/>
</dbReference>
<dbReference type="InterPro" id="IPR036436">
    <property type="entry name" value="Disintegrin_dom_sf"/>
</dbReference>
<dbReference type="InterPro" id="IPR000742">
    <property type="entry name" value="EGF-like_dom"/>
</dbReference>
<dbReference type="InterPro" id="IPR013111">
    <property type="entry name" value="EGF_extracell"/>
</dbReference>
<dbReference type="InterPro" id="IPR024079">
    <property type="entry name" value="MetalloPept_cat_dom_sf"/>
</dbReference>
<dbReference type="InterPro" id="IPR001590">
    <property type="entry name" value="Peptidase_M12B"/>
</dbReference>
<dbReference type="InterPro" id="IPR002870">
    <property type="entry name" value="Peptidase_M12B_N"/>
</dbReference>
<dbReference type="InterPro" id="IPR034027">
    <property type="entry name" value="Reprolysin_adamalysin"/>
</dbReference>
<dbReference type="PANTHER" id="PTHR11905">
    <property type="entry name" value="ADAM A DISINTEGRIN AND METALLOPROTEASE DOMAIN"/>
    <property type="match status" value="1"/>
</dbReference>
<dbReference type="PANTHER" id="PTHR11905:SF13">
    <property type="entry name" value="DISINTEGRIN AND METALLOPROTEINASE DOMAIN-CONTAINING PROTEIN 23"/>
    <property type="match status" value="1"/>
</dbReference>
<dbReference type="Pfam" id="PF08516">
    <property type="entry name" value="ADAM_CR"/>
    <property type="match status" value="1"/>
</dbReference>
<dbReference type="Pfam" id="PF00200">
    <property type="entry name" value="Disintegrin"/>
    <property type="match status" value="1"/>
</dbReference>
<dbReference type="Pfam" id="PF07974">
    <property type="entry name" value="EGF_2"/>
    <property type="match status" value="1"/>
</dbReference>
<dbReference type="Pfam" id="PF01562">
    <property type="entry name" value="Pep_M12B_propep"/>
    <property type="match status" value="1"/>
</dbReference>
<dbReference type="Pfam" id="PF01421">
    <property type="entry name" value="Reprolysin"/>
    <property type="match status" value="1"/>
</dbReference>
<dbReference type="SMART" id="SM00608">
    <property type="entry name" value="ACR"/>
    <property type="match status" value="1"/>
</dbReference>
<dbReference type="SMART" id="SM00050">
    <property type="entry name" value="DISIN"/>
    <property type="match status" value="1"/>
</dbReference>
<dbReference type="SUPFAM" id="SSF57552">
    <property type="entry name" value="Blood coagulation inhibitor (disintegrin)"/>
    <property type="match status" value="1"/>
</dbReference>
<dbReference type="SUPFAM" id="SSF55486">
    <property type="entry name" value="Metalloproteases ('zincins'), catalytic domain"/>
    <property type="match status" value="1"/>
</dbReference>
<dbReference type="PROSITE" id="PS50215">
    <property type="entry name" value="ADAM_MEPRO"/>
    <property type="match status" value="1"/>
</dbReference>
<dbReference type="PROSITE" id="PS50214">
    <property type="entry name" value="DISINTEGRIN_2"/>
    <property type="match status" value="1"/>
</dbReference>
<dbReference type="PROSITE" id="PS00022">
    <property type="entry name" value="EGF_1"/>
    <property type="match status" value="1"/>
</dbReference>
<dbReference type="PROSITE" id="PS50026">
    <property type="entry name" value="EGF_3"/>
    <property type="match status" value="1"/>
</dbReference>
<organism>
    <name type="scientific">Mus musculus</name>
    <name type="common">Mouse</name>
    <dbReference type="NCBI Taxonomy" id="10090"/>
    <lineage>
        <taxon>Eukaryota</taxon>
        <taxon>Metazoa</taxon>
        <taxon>Chordata</taxon>
        <taxon>Craniata</taxon>
        <taxon>Vertebrata</taxon>
        <taxon>Euteleostomi</taxon>
        <taxon>Mammalia</taxon>
        <taxon>Eutheria</taxon>
        <taxon>Euarchontoglires</taxon>
        <taxon>Glires</taxon>
        <taxon>Rodentia</taxon>
        <taxon>Myomorpha</taxon>
        <taxon>Muroidea</taxon>
        <taxon>Muridae</taxon>
        <taxon>Murinae</taxon>
        <taxon>Mus</taxon>
        <taxon>Mus</taxon>
    </lineage>
</organism>